<protein>
    <recommendedName>
        <fullName evidence="1">Small ribosomal subunit protein uS19</fullName>
    </recommendedName>
    <alternativeName>
        <fullName evidence="2">30S ribosomal protein S19</fullName>
    </alternativeName>
</protein>
<proteinExistence type="inferred from homology"/>
<comment type="function">
    <text evidence="1">Protein S19 forms a complex with S13 that binds strongly to the 16S ribosomal RNA.</text>
</comment>
<comment type="similarity">
    <text evidence="1">Belongs to the universal ribosomal protein uS19 family.</text>
</comment>
<accession>B2UMT6</accession>
<evidence type="ECO:0000255" key="1">
    <source>
        <dbReference type="HAMAP-Rule" id="MF_00531"/>
    </source>
</evidence>
<evidence type="ECO:0000305" key="2"/>
<name>RS19_AKKM8</name>
<sequence>MGRSLKKGPFVSQKLLAKIDAQLESGDRKPIKTWSRASMITPDFVGLTFLVHAGKNFATVYVTENMVGHKLGEFAPTRVFKQHGGIGKK</sequence>
<feature type="chain" id="PRO_0000354282" description="Small ribosomal subunit protein uS19">
    <location>
        <begin position="1"/>
        <end position="89"/>
    </location>
</feature>
<dbReference type="EMBL" id="CP001071">
    <property type="protein sequence ID" value="ACD04142.1"/>
    <property type="molecule type" value="Genomic_DNA"/>
</dbReference>
<dbReference type="RefSeq" id="WP_012419357.1">
    <property type="nucleotide sequence ID" value="NZ_CP071807.1"/>
</dbReference>
<dbReference type="SMR" id="B2UMT6"/>
<dbReference type="STRING" id="349741.Amuc_0300"/>
<dbReference type="PaxDb" id="349741-Amuc_0300"/>
<dbReference type="GeneID" id="60879778"/>
<dbReference type="KEGG" id="amu:Amuc_0300"/>
<dbReference type="eggNOG" id="COG0185">
    <property type="taxonomic scope" value="Bacteria"/>
</dbReference>
<dbReference type="HOGENOM" id="CLU_144911_0_1_0"/>
<dbReference type="OrthoDB" id="9797833at2"/>
<dbReference type="BioCyc" id="AMUC349741:G1GBX-342-MONOMER"/>
<dbReference type="Proteomes" id="UP000001031">
    <property type="component" value="Chromosome"/>
</dbReference>
<dbReference type="GO" id="GO:0005737">
    <property type="term" value="C:cytoplasm"/>
    <property type="evidence" value="ECO:0007669"/>
    <property type="project" value="UniProtKB-ARBA"/>
</dbReference>
<dbReference type="GO" id="GO:0015935">
    <property type="term" value="C:small ribosomal subunit"/>
    <property type="evidence" value="ECO:0007669"/>
    <property type="project" value="InterPro"/>
</dbReference>
<dbReference type="GO" id="GO:0019843">
    <property type="term" value="F:rRNA binding"/>
    <property type="evidence" value="ECO:0007669"/>
    <property type="project" value="UniProtKB-UniRule"/>
</dbReference>
<dbReference type="GO" id="GO:0003735">
    <property type="term" value="F:structural constituent of ribosome"/>
    <property type="evidence" value="ECO:0007669"/>
    <property type="project" value="InterPro"/>
</dbReference>
<dbReference type="GO" id="GO:0000028">
    <property type="term" value="P:ribosomal small subunit assembly"/>
    <property type="evidence" value="ECO:0007669"/>
    <property type="project" value="TreeGrafter"/>
</dbReference>
<dbReference type="GO" id="GO:0006412">
    <property type="term" value="P:translation"/>
    <property type="evidence" value="ECO:0007669"/>
    <property type="project" value="UniProtKB-UniRule"/>
</dbReference>
<dbReference type="FunFam" id="3.30.860.10:FF:000001">
    <property type="entry name" value="30S ribosomal protein S19"/>
    <property type="match status" value="1"/>
</dbReference>
<dbReference type="Gene3D" id="3.30.860.10">
    <property type="entry name" value="30s Ribosomal Protein S19, Chain A"/>
    <property type="match status" value="1"/>
</dbReference>
<dbReference type="HAMAP" id="MF_00531">
    <property type="entry name" value="Ribosomal_uS19"/>
    <property type="match status" value="1"/>
</dbReference>
<dbReference type="InterPro" id="IPR002222">
    <property type="entry name" value="Ribosomal_uS19"/>
</dbReference>
<dbReference type="InterPro" id="IPR005732">
    <property type="entry name" value="Ribosomal_uS19_bac-type"/>
</dbReference>
<dbReference type="InterPro" id="IPR023575">
    <property type="entry name" value="Ribosomal_uS19_SF"/>
</dbReference>
<dbReference type="NCBIfam" id="TIGR01050">
    <property type="entry name" value="rpsS_bact"/>
    <property type="match status" value="1"/>
</dbReference>
<dbReference type="PANTHER" id="PTHR11880">
    <property type="entry name" value="RIBOSOMAL PROTEIN S19P FAMILY MEMBER"/>
    <property type="match status" value="1"/>
</dbReference>
<dbReference type="PANTHER" id="PTHR11880:SF8">
    <property type="entry name" value="SMALL RIBOSOMAL SUBUNIT PROTEIN US19M"/>
    <property type="match status" value="1"/>
</dbReference>
<dbReference type="Pfam" id="PF00203">
    <property type="entry name" value="Ribosomal_S19"/>
    <property type="match status" value="1"/>
</dbReference>
<dbReference type="PIRSF" id="PIRSF002144">
    <property type="entry name" value="Ribosomal_S19"/>
    <property type="match status" value="1"/>
</dbReference>
<dbReference type="PRINTS" id="PR00975">
    <property type="entry name" value="RIBOSOMALS19"/>
</dbReference>
<dbReference type="SUPFAM" id="SSF54570">
    <property type="entry name" value="Ribosomal protein S19"/>
    <property type="match status" value="1"/>
</dbReference>
<reference key="1">
    <citation type="journal article" date="2011" name="PLoS ONE">
        <title>The genome of Akkermansia muciniphila, a dedicated intestinal mucin degrader, and its use in exploring intestinal metagenomes.</title>
        <authorList>
            <person name="van Passel M.W."/>
            <person name="Kant R."/>
            <person name="Zoetendal E.G."/>
            <person name="Plugge C.M."/>
            <person name="Derrien M."/>
            <person name="Malfatti S.A."/>
            <person name="Chain P.S."/>
            <person name="Woyke T."/>
            <person name="Palva A."/>
            <person name="de Vos W.M."/>
            <person name="Smidt H."/>
        </authorList>
    </citation>
    <scope>NUCLEOTIDE SEQUENCE [LARGE SCALE GENOMIC DNA]</scope>
    <source>
        <strain>ATCC BAA-835 / DSM 22959 / JCM 33894 / BCRC 81048 / CCUG 64013 / CIP 107961 / Muc</strain>
    </source>
</reference>
<keyword id="KW-1185">Reference proteome</keyword>
<keyword id="KW-0687">Ribonucleoprotein</keyword>
<keyword id="KW-0689">Ribosomal protein</keyword>
<keyword id="KW-0694">RNA-binding</keyword>
<keyword id="KW-0699">rRNA-binding</keyword>
<gene>
    <name evidence="1" type="primary">rpsS</name>
    <name type="ordered locus">Amuc_0300</name>
</gene>
<organism>
    <name type="scientific">Akkermansia muciniphila (strain ATCC BAA-835 / DSM 22959 / JCM 33894 / BCRC 81048 / CCUG 64013 / CIP 107961 / Muc)</name>
    <dbReference type="NCBI Taxonomy" id="349741"/>
    <lineage>
        <taxon>Bacteria</taxon>
        <taxon>Pseudomonadati</taxon>
        <taxon>Verrucomicrobiota</taxon>
        <taxon>Verrucomicrobiia</taxon>
        <taxon>Verrucomicrobiales</taxon>
        <taxon>Akkermansiaceae</taxon>
        <taxon>Akkermansia</taxon>
    </lineage>
</organism>